<protein>
    <recommendedName>
        <fullName>Pentatricopeptide repeat-containing protein At2g21090</fullName>
    </recommendedName>
</protein>
<comment type="similarity">
    <text evidence="1">Belongs to the PPR family. PCMP-E subfamily.</text>
</comment>
<comment type="online information" name="Pentatricopeptide repeat proteins">
    <link uri="https://ppr.plantenergy.uwa.edu.au"/>
</comment>
<keyword id="KW-1185">Reference proteome</keyword>
<keyword id="KW-0677">Repeat</keyword>
<name>PP167_ARATH</name>
<evidence type="ECO:0000305" key="1"/>
<proteinExistence type="evidence at transcript level"/>
<feature type="chain" id="PRO_0000356026" description="Pentatricopeptide repeat-containing protein At2g21090">
    <location>
        <begin position="1"/>
        <end position="597"/>
    </location>
</feature>
<feature type="repeat" description="PPR 1">
    <location>
        <begin position="45"/>
        <end position="79"/>
    </location>
</feature>
<feature type="repeat" description="PPR 2">
    <location>
        <begin position="81"/>
        <end position="111"/>
    </location>
</feature>
<feature type="repeat" description="PPR 3">
    <location>
        <begin position="112"/>
        <end position="142"/>
    </location>
</feature>
<feature type="repeat" description="PPR 4">
    <location>
        <begin position="143"/>
        <end position="177"/>
    </location>
</feature>
<feature type="repeat" description="PPR 5">
    <location>
        <begin position="178"/>
        <end position="212"/>
    </location>
</feature>
<feature type="repeat" description="PPR 6">
    <location>
        <begin position="213"/>
        <end position="243"/>
    </location>
</feature>
<feature type="repeat" description="PPR 7">
    <location>
        <begin position="244"/>
        <end position="274"/>
    </location>
</feature>
<feature type="repeat" description="PPR 8">
    <location>
        <begin position="275"/>
        <end position="309"/>
    </location>
</feature>
<feature type="repeat" description="PPR 9">
    <location>
        <begin position="310"/>
        <end position="344"/>
    </location>
</feature>
<feature type="repeat" description="PPR 10">
    <location>
        <begin position="345"/>
        <end position="375"/>
    </location>
</feature>
<feature type="repeat" description="PPR 11">
    <location>
        <begin position="377"/>
        <end position="411"/>
    </location>
</feature>
<feature type="repeat" description="PPR 12">
    <location>
        <begin position="412"/>
        <end position="447"/>
    </location>
</feature>
<feature type="repeat" description="PPR 13">
    <location>
        <begin position="448"/>
        <end position="478"/>
    </location>
</feature>
<feature type="region of interest" description="Type E motif">
    <location>
        <begin position="483"/>
        <end position="558"/>
    </location>
</feature>
<feature type="region of interest" description="Type E(+) motif">
    <location>
        <begin position="559"/>
        <end position="591"/>
    </location>
</feature>
<reference key="1">
    <citation type="journal article" date="1999" name="Nature">
        <title>Sequence and analysis of chromosome 2 of the plant Arabidopsis thaliana.</title>
        <authorList>
            <person name="Lin X."/>
            <person name="Kaul S."/>
            <person name="Rounsley S.D."/>
            <person name="Shea T.P."/>
            <person name="Benito M.-I."/>
            <person name="Town C.D."/>
            <person name="Fujii C.Y."/>
            <person name="Mason T.M."/>
            <person name="Bowman C.L."/>
            <person name="Barnstead M.E."/>
            <person name="Feldblyum T.V."/>
            <person name="Buell C.R."/>
            <person name="Ketchum K.A."/>
            <person name="Lee J.J."/>
            <person name="Ronning C.M."/>
            <person name="Koo H.L."/>
            <person name="Moffat K.S."/>
            <person name="Cronin L.A."/>
            <person name="Shen M."/>
            <person name="Pai G."/>
            <person name="Van Aken S."/>
            <person name="Umayam L."/>
            <person name="Tallon L.J."/>
            <person name="Gill J.E."/>
            <person name="Adams M.D."/>
            <person name="Carrera A.J."/>
            <person name="Creasy T.H."/>
            <person name="Goodman H.M."/>
            <person name="Somerville C.R."/>
            <person name="Copenhaver G.P."/>
            <person name="Preuss D."/>
            <person name="Nierman W.C."/>
            <person name="White O."/>
            <person name="Eisen J.A."/>
            <person name="Salzberg S.L."/>
            <person name="Fraser C.M."/>
            <person name="Venter J.C."/>
        </authorList>
    </citation>
    <scope>NUCLEOTIDE SEQUENCE [LARGE SCALE GENOMIC DNA]</scope>
    <source>
        <strain>cv. Columbia</strain>
    </source>
</reference>
<reference key="2">
    <citation type="journal article" date="2017" name="Plant J.">
        <title>Araport11: a complete reannotation of the Arabidopsis thaliana reference genome.</title>
        <authorList>
            <person name="Cheng C.Y."/>
            <person name="Krishnakumar V."/>
            <person name="Chan A.P."/>
            <person name="Thibaud-Nissen F."/>
            <person name="Schobel S."/>
            <person name="Town C.D."/>
        </authorList>
    </citation>
    <scope>GENOME REANNOTATION</scope>
    <source>
        <strain>cv. Columbia</strain>
    </source>
</reference>
<reference key="3">
    <citation type="journal article" date="2004" name="Genome Res.">
        <title>Whole genome sequence comparisons and 'full-length' cDNA sequences: a combined approach to evaluate and improve Arabidopsis genome annotation.</title>
        <authorList>
            <person name="Castelli V."/>
            <person name="Aury J.-M."/>
            <person name="Jaillon O."/>
            <person name="Wincker P."/>
            <person name="Clepet C."/>
            <person name="Menard M."/>
            <person name="Cruaud C."/>
            <person name="Quetier F."/>
            <person name="Scarpelli C."/>
            <person name="Schaechter V."/>
            <person name="Temple G."/>
            <person name="Caboche M."/>
            <person name="Weissenbach J."/>
            <person name="Salanoubat M."/>
        </authorList>
    </citation>
    <scope>NUCLEOTIDE SEQUENCE [LARGE SCALE MRNA]</scope>
    <source>
        <strain>cv. Columbia</strain>
    </source>
</reference>
<reference key="4">
    <citation type="journal article" date="2000" name="Plant Mol. Biol.">
        <title>In Arabidopsis thaliana, 1% of the genome codes for a novel protein family unique to plants.</title>
        <authorList>
            <person name="Aubourg S."/>
            <person name="Boudet N."/>
            <person name="Kreis M."/>
            <person name="Lecharny A."/>
        </authorList>
    </citation>
    <scope>GENE FAMILY</scope>
</reference>
<reference key="5">
    <citation type="journal article" date="2004" name="Plant Cell">
        <title>Genome-wide analysis of Arabidopsis pentatricopeptide repeat proteins reveals their essential role in organelle biogenesis.</title>
        <authorList>
            <person name="Lurin C."/>
            <person name="Andres C."/>
            <person name="Aubourg S."/>
            <person name="Bellaoui M."/>
            <person name="Bitton F."/>
            <person name="Bruyere C."/>
            <person name="Caboche M."/>
            <person name="Debast C."/>
            <person name="Gualberto J."/>
            <person name="Hoffmann B."/>
            <person name="Lecharny A."/>
            <person name="Le Ret M."/>
            <person name="Martin-Magniette M.-L."/>
            <person name="Mireau H."/>
            <person name="Peeters N."/>
            <person name="Renou J.-P."/>
            <person name="Szurek B."/>
            <person name="Taconnat L."/>
            <person name="Small I."/>
        </authorList>
    </citation>
    <scope>GENE FAMILY</scope>
</reference>
<gene>
    <name type="primary">PCMP-E48</name>
    <name type="ordered locus">At2g21090</name>
    <name type="ORF">F26H11.15</name>
</gene>
<dbReference type="EMBL" id="AC006264">
    <property type="protein sequence ID" value="AAD29807.1"/>
    <property type="molecule type" value="Genomic_DNA"/>
</dbReference>
<dbReference type="EMBL" id="CP002685">
    <property type="protein sequence ID" value="AEC07122.1"/>
    <property type="molecule type" value="Genomic_DNA"/>
</dbReference>
<dbReference type="EMBL" id="BX820424">
    <property type="status" value="NOT_ANNOTATED_CDS"/>
    <property type="molecule type" value="mRNA"/>
</dbReference>
<dbReference type="PIR" id="A84597">
    <property type="entry name" value="A84597"/>
</dbReference>
<dbReference type="RefSeq" id="NP_179705.1">
    <property type="nucleotide sequence ID" value="NM_127679.4"/>
</dbReference>
<dbReference type="SMR" id="Q9SKQ4"/>
<dbReference type="FunCoup" id="Q9SKQ4">
    <property type="interactions" value="297"/>
</dbReference>
<dbReference type="PaxDb" id="3702-AT2G21090.1"/>
<dbReference type="ProteomicsDB" id="250497"/>
<dbReference type="EnsemblPlants" id="AT2G21090.1">
    <property type="protein sequence ID" value="AT2G21090.1"/>
    <property type="gene ID" value="AT2G21090"/>
</dbReference>
<dbReference type="GeneID" id="816644"/>
<dbReference type="Gramene" id="AT2G21090.1">
    <property type="protein sequence ID" value="AT2G21090.1"/>
    <property type="gene ID" value="AT2G21090"/>
</dbReference>
<dbReference type="KEGG" id="ath:AT2G21090"/>
<dbReference type="Araport" id="AT2G21090"/>
<dbReference type="TAIR" id="AT2G21090"/>
<dbReference type="eggNOG" id="KOG4197">
    <property type="taxonomic scope" value="Eukaryota"/>
</dbReference>
<dbReference type="HOGENOM" id="CLU_002706_0_2_1"/>
<dbReference type="InParanoid" id="Q9SKQ4"/>
<dbReference type="OMA" id="AISWVEI"/>
<dbReference type="PhylomeDB" id="Q9SKQ4"/>
<dbReference type="PRO" id="PR:Q9SKQ4"/>
<dbReference type="Proteomes" id="UP000006548">
    <property type="component" value="Chromosome 2"/>
</dbReference>
<dbReference type="ExpressionAtlas" id="Q9SKQ4">
    <property type="expression patterns" value="baseline and differential"/>
</dbReference>
<dbReference type="GO" id="GO:0003723">
    <property type="term" value="F:RNA binding"/>
    <property type="evidence" value="ECO:0007669"/>
    <property type="project" value="InterPro"/>
</dbReference>
<dbReference type="GO" id="GO:0009451">
    <property type="term" value="P:RNA modification"/>
    <property type="evidence" value="ECO:0007669"/>
    <property type="project" value="InterPro"/>
</dbReference>
<dbReference type="FunFam" id="1.25.40.10:FF:001399">
    <property type="entry name" value="Pentatricopeptide repeat-containing protein"/>
    <property type="match status" value="1"/>
</dbReference>
<dbReference type="FunFam" id="1.25.40.10:FF:000709">
    <property type="entry name" value="Pentatricopeptide repeat-containing protein At2g21090"/>
    <property type="match status" value="1"/>
</dbReference>
<dbReference type="FunFam" id="1.25.40.10:FF:001561">
    <property type="entry name" value="Pentatricopeptide repeat-containing protein At2g21090"/>
    <property type="match status" value="1"/>
</dbReference>
<dbReference type="Gene3D" id="1.25.40.10">
    <property type="entry name" value="Tetratricopeptide repeat domain"/>
    <property type="match status" value="5"/>
</dbReference>
<dbReference type="InterPro" id="IPR046848">
    <property type="entry name" value="E_motif"/>
</dbReference>
<dbReference type="InterPro" id="IPR002885">
    <property type="entry name" value="Pentatricopeptide_rpt"/>
</dbReference>
<dbReference type="InterPro" id="IPR046960">
    <property type="entry name" value="PPR_At4g14850-like_plant"/>
</dbReference>
<dbReference type="InterPro" id="IPR011990">
    <property type="entry name" value="TPR-like_helical_dom_sf"/>
</dbReference>
<dbReference type="NCBIfam" id="TIGR00756">
    <property type="entry name" value="PPR"/>
    <property type="match status" value="7"/>
</dbReference>
<dbReference type="PANTHER" id="PTHR47926:SF465">
    <property type="entry name" value="PENTATRICOPEPTIDE REPEAT (PPR-LIKE) SUPERFAMILY PROTEIN"/>
    <property type="match status" value="1"/>
</dbReference>
<dbReference type="PANTHER" id="PTHR47926">
    <property type="entry name" value="PENTATRICOPEPTIDE REPEAT-CONTAINING PROTEIN"/>
    <property type="match status" value="1"/>
</dbReference>
<dbReference type="Pfam" id="PF20431">
    <property type="entry name" value="E_motif"/>
    <property type="match status" value="1"/>
</dbReference>
<dbReference type="Pfam" id="PF01535">
    <property type="entry name" value="PPR"/>
    <property type="match status" value="2"/>
</dbReference>
<dbReference type="Pfam" id="PF12854">
    <property type="entry name" value="PPR_1"/>
    <property type="match status" value="1"/>
</dbReference>
<dbReference type="Pfam" id="PF13041">
    <property type="entry name" value="PPR_2"/>
    <property type="match status" value="3"/>
</dbReference>
<dbReference type="PROSITE" id="PS51375">
    <property type="entry name" value="PPR"/>
    <property type="match status" value="14"/>
</dbReference>
<accession>Q9SKQ4</accession>
<organism>
    <name type="scientific">Arabidopsis thaliana</name>
    <name type="common">Mouse-ear cress</name>
    <dbReference type="NCBI Taxonomy" id="3702"/>
    <lineage>
        <taxon>Eukaryota</taxon>
        <taxon>Viridiplantae</taxon>
        <taxon>Streptophyta</taxon>
        <taxon>Embryophyta</taxon>
        <taxon>Tracheophyta</taxon>
        <taxon>Spermatophyta</taxon>
        <taxon>Magnoliopsida</taxon>
        <taxon>eudicotyledons</taxon>
        <taxon>Gunneridae</taxon>
        <taxon>Pentapetalae</taxon>
        <taxon>rosids</taxon>
        <taxon>malvids</taxon>
        <taxon>Brassicales</taxon>
        <taxon>Brassicaceae</taxon>
        <taxon>Camelineae</taxon>
        <taxon>Arabidopsis</taxon>
    </lineage>
</organism>
<sequence length="597" mass="67518">MPISNPRKRPICVAQSFLSKHATKAELSQAVSRLESLTQQGIRLPFDLLASLLQQCGDTKSLKQGKWIHRHLKITGFKRPNTLLSNHLIGMYMKCGKPIDACKVFDQMHLRNLYSWNNMVSGYVKSGMLVRARVVFDSMPERDVVSWNTMVIGYAQDGNLHEALWFYKEFRRSGIKFNEFSFAGLLTACVKSRQLQLNRQAHGQVLVAGFLSNVVLSCSIIDAYAKCGQMESAKRCFDEMTVKDIHIWTTLISGYAKLGDMEAAEKLFCEMPEKNPVSWTALIAGYVRQGSGNRALDLFRKMIALGVKPEQFTFSSCLCASASIASLRHGKEIHGYMIRTNVRPNAIVISSLIDMYSKSGSLEASERVFRICDDKHDCVFWNTMISALAQHGLGHKALRMLDDMIKFRVQPNRTTLVVILNACSHSGLVEEGLRWFESMTVQHGIVPDQEHYACLIDLLGRAGCFKELMRKIEEMPFEPDKHIWNAILGVCRIHGNEELGKKAADELIKLDPESSAPYILLSSIYADHGKWELVEKLRGVMKKRRVNKEKAVSWIEIEKKVEAFTVSDGSHAHARKEEIYFILHNLAAVIEEEASRT</sequence>